<name>HTPG_COXBU</name>
<organism>
    <name type="scientific">Coxiella burnetii (strain RSA 493 / Nine Mile phase I)</name>
    <dbReference type="NCBI Taxonomy" id="227377"/>
    <lineage>
        <taxon>Bacteria</taxon>
        <taxon>Pseudomonadati</taxon>
        <taxon>Pseudomonadota</taxon>
        <taxon>Gammaproteobacteria</taxon>
        <taxon>Legionellales</taxon>
        <taxon>Coxiellaceae</taxon>
        <taxon>Coxiella</taxon>
    </lineage>
</organism>
<reference key="1">
    <citation type="journal article" date="2003" name="Proc. Natl. Acad. Sci. U.S.A.">
        <title>Complete genome sequence of the Q-fever pathogen, Coxiella burnetii.</title>
        <authorList>
            <person name="Seshadri R."/>
            <person name="Paulsen I.T."/>
            <person name="Eisen J.A."/>
            <person name="Read T.D."/>
            <person name="Nelson K.E."/>
            <person name="Nelson W.C."/>
            <person name="Ward N.L."/>
            <person name="Tettelin H."/>
            <person name="Davidsen T.M."/>
            <person name="Beanan M.J."/>
            <person name="DeBoy R.T."/>
            <person name="Daugherty S.C."/>
            <person name="Brinkac L.M."/>
            <person name="Madupu R."/>
            <person name="Dodson R.J."/>
            <person name="Khouri H.M."/>
            <person name="Lee K.H."/>
            <person name="Carty H.A."/>
            <person name="Scanlan D."/>
            <person name="Heinzen R.A."/>
            <person name="Thompson H.A."/>
            <person name="Samuel J.E."/>
            <person name="Fraser C.M."/>
            <person name="Heidelberg J.F."/>
        </authorList>
    </citation>
    <scope>NUCLEOTIDE SEQUENCE [LARGE SCALE GENOMIC DNA]</scope>
    <source>
        <strain>RSA 493 / Nine Mile phase I</strain>
    </source>
</reference>
<reference key="2">
    <citation type="journal article" date="2007" name="Infect. Immun.">
        <title>Proteome and antigen profiling of Coxiella burnetii developmental forms.</title>
        <authorList>
            <person name="Coleman S.A."/>
            <person name="Fischer E.R."/>
            <person name="Cockrell D.C."/>
            <person name="Voth D.E."/>
            <person name="Howe D."/>
            <person name="Mead D.J."/>
            <person name="Samuel J.E."/>
            <person name="Heinzen R.A."/>
        </authorList>
    </citation>
    <scope>IDENTIFICATION BY MASS SPECTROMETRY</scope>
    <scope>DEVELOPMENTAL STAGE</scope>
    <source>
        <strain>Nine Mile Crazy / RSA 514</strain>
    </source>
</reference>
<sequence length="633" mass="72774">MSLQPQAETLSFEAEVKQLLHLVAHSLYSNKEIFLRELISNSSDAADKLRYQALSDAALYENDADLKIWIDFDKDNRTITIRDNGIGMSREEVIENLGTIAKSGTRAFRELLAEKKAEDSQLIGQFGVGFYSAFIVADRVVVRTRRAGMKADQGVEWESTGEGEYTLKNIDKPTRGTEVVLHLKESEEEFLDPLRLRAIITKYSDHILLPIVMKKIKTSGADDEDKNETPEEEVVNRANALWVLPKDKIKDEEYKELYKHIAHDFEDPLAWVHNKVEGKLEYTTLLYIPARAPFDLWNREGQRGLKLYVKRIFIMDDAEHFMPMYLRFVKGIVDSNDLPLNISRELLQSNEVINKIKAGCVKRILSLLEDLAKNDKEKYASFWKAFGQVLKEGPAEDFANRDRIANLLRFASTHNDTDEQNVSLQDYISRMKPEQNKIYYIVADTYTSAKNSPLLEVFRKKDIEVLLMSDRVDEWLVAHLNEFEGKSLQSIAKGTLDLGDLEKEEKVETEKFEKDFDELLKQFKEVLGEKIKDVRITHRLTDSPTCVVFDENEMSGHLQRLLIQTGQDFMQAKPILEINPSHPLILRVKNESDKTRFNRWADLLLNQALLAEGEQLKDPASFVKGLNELLLDS</sequence>
<gene>
    <name evidence="1" type="primary">htpG</name>
    <name type="ordered locus">CBU_0309</name>
</gene>
<accession>Q83EL0</accession>
<feature type="chain" id="PRO_0000062984" description="Chaperone protein HtpG">
    <location>
        <begin position="1"/>
        <end position="633"/>
    </location>
</feature>
<feature type="region of interest" description="A; substrate-binding" evidence="1">
    <location>
        <begin position="1"/>
        <end position="344"/>
    </location>
</feature>
<feature type="region of interest" description="B" evidence="1">
    <location>
        <begin position="345"/>
        <end position="560"/>
    </location>
</feature>
<feature type="region of interest" description="C" evidence="1">
    <location>
        <begin position="561"/>
        <end position="633"/>
    </location>
</feature>
<comment type="function">
    <text evidence="1">Molecular chaperone. Has ATPase activity.</text>
</comment>
<comment type="subunit">
    <text evidence="1">Homodimer.</text>
</comment>
<comment type="subcellular location">
    <subcellularLocation>
        <location evidence="1">Cytoplasm</location>
    </subcellularLocation>
</comment>
<comment type="developmental stage">
    <text evidence="2">More than twofold more abundant in the large cell variant (LCV) stage than in the small cell variant (SCV) stage (at protein level). LCVs are more metabolically active than SCVs.</text>
</comment>
<comment type="similarity">
    <text evidence="1">Belongs to the heat shock protein 90 family.</text>
</comment>
<comment type="sequence caution" evidence="3">
    <conflict type="erroneous initiation">
        <sequence resource="EMBL-CDS" id="AAO89866"/>
    </conflict>
</comment>
<keyword id="KW-0067">ATP-binding</keyword>
<keyword id="KW-0143">Chaperone</keyword>
<keyword id="KW-0963">Cytoplasm</keyword>
<keyword id="KW-0547">Nucleotide-binding</keyword>
<keyword id="KW-1185">Reference proteome</keyword>
<keyword id="KW-0346">Stress response</keyword>
<dbReference type="EMBL" id="AE016828">
    <property type="protein sequence ID" value="AAO89866.2"/>
    <property type="status" value="ALT_INIT"/>
    <property type="molecule type" value="Genomic_DNA"/>
</dbReference>
<dbReference type="RefSeq" id="NP_819352.2">
    <property type="nucleotide sequence ID" value="NC_002971.3"/>
</dbReference>
<dbReference type="RefSeq" id="WP_010957494.1">
    <property type="nucleotide sequence ID" value="NC_002971.4"/>
</dbReference>
<dbReference type="RefSeq" id="WP_026051156.1">
    <property type="nucleotide sequence ID" value="NZ_CDBG01000001.1"/>
</dbReference>
<dbReference type="SMR" id="Q83EL0"/>
<dbReference type="STRING" id="227377.CBU_0309"/>
<dbReference type="EnsemblBacteria" id="AAO89866">
    <property type="protein sequence ID" value="AAO89866"/>
    <property type="gene ID" value="CBU_0309"/>
</dbReference>
<dbReference type="GeneID" id="1208191"/>
<dbReference type="KEGG" id="cbu:CBU_0309"/>
<dbReference type="PATRIC" id="fig|227377.7.peg.302"/>
<dbReference type="eggNOG" id="COG0326">
    <property type="taxonomic scope" value="Bacteria"/>
</dbReference>
<dbReference type="HOGENOM" id="CLU_006684_3_0_6"/>
<dbReference type="OrthoDB" id="9802640at2"/>
<dbReference type="Proteomes" id="UP000002671">
    <property type="component" value="Chromosome"/>
</dbReference>
<dbReference type="GO" id="GO:0005829">
    <property type="term" value="C:cytosol"/>
    <property type="evidence" value="ECO:0000318"/>
    <property type="project" value="GO_Central"/>
</dbReference>
<dbReference type="GO" id="GO:0005524">
    <property type="term" value="F:ATP binding"/>
    <property type="evidence" value="ECO:0000318"/>
    <property type="project" value="GO_Central"/>
</dbReference>
<dbReference type="GO" id="GO:0016887">
    <property type="term" value="F:ATP hydrolysis activity"/>
    <property type="evidence" value="ECO:0000318"/>
    <property type="project" value="GO_Central"/>
</dbReference>
<dbReference type="GO" id="GO:0140662">
    <property type="term" value="F:ATP-dependent protein folding chaperone"/>
    <property type="evidence" value="ECO:0007669"/>
    <property type="project" value="InterPro"/>
</dbReference>
<dbReference type="GO" id="GO:0051082">
    <property type="term" value="F:unfolded protein binding"/>
    <property type="evidence" value="ECO:0000318"/>
    <property type="project" value="GO_Central"/>
</dbReference>
<dbReference type="GO" id="GO:0006974">
    <property type="term" value="P:DNA damage response"/>
    <property type="evidence" value="ECO:0000318"/>
    <property type="project" value="GO_Central"/>
</dbReference>
<dbReference type="GO" id="GO:0006457">
    <property type="term" value="P:protein folding"/>
    <property type="evidence" value="ECO:0000318"/>
    <property type="project" value="GO_Central"/>
</dbReference>
<dbReference type="GO" id="GO:0009408">
    <property type="term" value="P:response to heat"/>
    <property type="evidence" value="ECO:0000318"/>
    <property type="project" value="GO_Central"/>
</dbReference>
<dbReference type="CDD" id="cd16927">
    <property type="entry name" value="HATPase_Hsp90-like"/>
    <property type="match status" value="1"/>
</dbReference>
<dbReference type="FunFam" id="1.20.120.790:FF:000006">
    <property type="entry name" value="Chaperone protein HtpG"/>
    <property type="match status" value="1"/>
</dbReference>
<dbReference type="FunFam" id="3.40.50.11260:FF:000005">
    <property type="entry name" value="Heat shock protein 90"/>
    <property type="match status" value="1"/>
</dbReference>
<dbReference type="FunFam" id="3.30.230.80:FF:000002">
    <property type="entry name" value="Molecular chaperone HtpG"/>
    <property type="match status" value="1"/>
</dbReference>
<dbReference type="FunFam" id="3.30.565.10:FF:000009">
    <property type="entry name" value="Molecular chaperone HtpG"/>
    <property type="match status" value="1"/>
</dbReference>
<dbReference type="Gene3D" id="3.30.230.80">
    <property type="match status" value="1"/>
</dbReference>
<dbReference type="Gene3D" id="3.40.50.11260">
    <property type="match status" value="1"/>
</dbReference>
<dbReference type="Gene3D" id="1.20.120.790">
    <property type="entry name" value="Heat shock protein 90, C-terminal domain"/>
    <property type="match status" value="1"/>
</dbReference>
<dbReference type="Gene3D" id="3.30.565.10">
    <property type="entry name" value="Histidine kinase-like ATPase, C-terminal domain"/>
    <property type="match status" value="1"/>
</dbReference>
<dbReference type="HAMAP" id="MF_00505">
    <property type="entry name" value="HSP90"/>
    <property type="match status" value="1"/>
</dbReference>
<dbReference type="InterPro" id="IPR036890">
    <property type="entry name" value="HATPase_C_sf"/>
</dbReference>
<dbReference type="InterPro" id="IPR019805">
    <property type="entry name" value="Heat_shock_protein_90_CS"/>
</dbReference>
<dbReference type="InterPro" id="IPR037196">
    <property type="entry name" value="HSP90_C"/>
</dbReference>
<dbReference type="InterPro" id="IPR001404">
    <property type="entry name" value="Hsp90_fam"/>
</dbReference>
<dbReference type="InterPro" id="IPR020575">
    <property type="entry name" value="Hsp90_N"/>
</dbReference>
<dbReference type="InterPro" id="IPR020568">
    <property type="entry name" value="Ribosomal_Su5_D2-typ_SF"/>
</dbReference>
<dbReference type="NCBIfam" id="NF003555">
    <property type="entry name" value="PRK05218.1"/>
    <property type="match status" value="1"/>
</dbReference>
<dbReference type="PANTHER" id="PTHR11528">
    <property type="entry name" value="HEAT SHOCK PROTEIN 90 FAMILY MEMBER"/>
    <property type="match status" value="1"/>
</dbReference>
<dbReference type="Pfam" id="PF13589">
    <property type="entry name" value="HATPase_c_3"/>
    <property type="match status" value="1"/>
</dbReference>
<dbReference type="Pfam" id="PF00183">
    <property type="entry name" value="HSP90"/>
    <property type="match status" value="1"/>
</dbReference>
<dbReference type="PIRSF" id="PIRSF002583">
    <property type="entry name" value="Hsp90"/>
    <property type="match status" value="1"/>
</dbReference>
<dbReference type="PRINTS" id="PR00775">
    <property type="entry name" value="HEATSHOCK90"/>
</dbReference>
<dbReference type="SMART" id="SM00387">
    <property type="entry name" value="HATPase_c"/>
    <property type="match status" value="1"/>
</dbReference>
<dbReference type="SUPFAM" id="SSF55874">
    <property type="entry name" value="ATPase domain of HSP90 chaperone/DNA topoisomerase II/histidine kinase"/>
    <property type="match status" value="1"/>
</dbReference>
<dbReference type="SUPFAM" id="SSF110942">
    <property type="entry name" value="HSP90 C-terminal domain"/>
    <property type="match status" value="1"/>
</dbReference>
<dbReference type="SUPFAM" id="SSF54211">
    <property type="entry name" value="Ribosomal protein S5 domain 2-like"/>
    <property type="match status" value="1"/>
</dbReference>
<dbReference type="PROSITE" id="PS00298">
    <property type="entry name" value="HSP90"/>
    <property type="match status" value="1"/>
</dbReference>
<protein>
    <recommendedName>
        <fullName evidence="1">Chaperone protein HtpG</fullName>
    </recommendedName>
    <alternativeName>
        <fullName evidence="1">Heat shock protein HtpG</fullName>
    </alternativeName>
    <alternativeName>
        <fullName evidence="1">High temperature protein G</fullName>
    </alternativeName>
</protein>
<proteinExistence type="evidence at protein level"/>
<evidence type="ECO:0000255" key="1">
    <source>
        <dbReference type="HAMAP-Rule" id="MF_00505"/>
    </source>
</evidence>
<evidence type="ECO:0000269" key="2">
    <source>
    </source>
</evidence>
<evidence type="ECO:0000305" key="3"/>